<reference key="1">
    <citation type="journal article" date="2003" name="Nature">
        <title>The genome sequence of Bacillus anthracis Ames and comparison to closely related bacteria.</title>
        <authorList>
            <person name="Read T.D."/>
            <person name="Peterson S.N."/>
            <person name="Tourasse N.J."/>
            <person name="Baillie L.W."/>
            <person name="Paulsen I.T."/>
            <person name="Nelson K.E."/>
            <person name="Tettelin H."/>
            <person name="Fouts D.E."/>
            <person name="Eisen J.A."/>
            <person name="Gill S.R."/>
            <person name="Holtzapple E.K."/>
            <person name="Okstad O.A."/>
            <person name="Helgason E."/>
            <person name="Rilstone J."/>
            <person name="Wu M."/>
            <person name="Kolonay J.F."/>
            <person name="Beanan M.J."/>
            <person name="Dodson R.J."/>
            <person name="Brinkac L.M."/>
            <person name="Gwinn M.L."/>
            <person name="DeBoy R.T."/>
            <person name="Madpu R."/>
            <person name="Daugherty S.C."/>
            <person name="Durkin A.S."/>
            <person name="Haft D.H."/>
            <person name="Nelson W.C."/>
            <person name="Peterson J.D."/>
            <person name="Pop M."/>
            <person name="Khouri H.M."/>
            <person name="Radune D."/>
            <person name="Benton J.L."/>
            <person name="Mahamoud Y."/>
            <person name="Jiang L."/>
            <person name="Hance I.R."/>
            <person name="Weidman J.F."/>
            <person name="Berry K.J."/>
            <person name="Plaut R.D."/>
            <person name="Wolf A.M."/>
            <person name="Watkins K.L."/>
            <person name="Nierman W.C."/>
            <person name="Hazen A."/>
            <person name="Cline R.T."/>
            <person name="Redmond C."/>
            <person name="Thwaite J.E."/>
            <person name="White O."/>
            <person name="Salzberg S.L."/>
            <person name="Thomason B."/>
            <person name="Friedlander A.M."/>
            <person name="Koehler T.M."/>
            <person name="Hanna P.C."/>
            <person name="Kolstoe A.-B."/>
            <person name="Fraser C.M."/>
        </authorList>
    </citation>
    <scope>NUCLEOTIDE SEQUENCE [LARGE SCALE GENOMIC DNA]</scope>
    <source>
        <strain>Ames / isolate Porton</strain>
    </source>
</reference>
<reference key="2">
    <citation type="journal article" date="2009" name="J. Bacteriol.">
        <title>The complete genome sequence of Bacillus anthracis Ames 'Ancestor'.</title>
        <authorList>
            <person name="Ravel J."/>
            <person name="Jiang L."/>
            <person name="Stanley S.T."/>
            <person name="Wilson M.R."/>
            <person name="Decker R.S."/>
            <person name="Read T.D."/>
            <person name="Worsham P."/>
            <person name="Keim P.S."/>
            <person name="Salzberg S.L."/>
            <person name="Fraser-Liggett C.M."/>
            <person name="Rasko D.A."/>
        </authorList>
    </citation>
    <scope>NUCLEOTIDE SEQUENCE [LARGE SCALE GENOMIC DNA]</scope>
    <source>
        <strain>Ames ancestor</strain>
    </source>
</reference>
<reference key="3">
    <citation type="submission" date="2004-01" db="EMBL/GenBank/DDBJ databases">
        <title>Complete genome sequence of Bacillus anthracis Sterne.</title>
        <authorList>
            <person name="Brettin T.S."/>
            <person name="Bruce D."/>
            <person name="Challacombe J.F."/>
            <person name="Gilna P."/>
            <person name="Han C."/>
            <person name="Hill K."/>
            <person name="Hitchcock P."/>
            <person name="Jackson P."/>
            <person name="Keim P."/>
            <person name="Longmire J."/>
            <person name="Lucas S."/>
            <person name="Okinaka R."/>
            <person name="Richardson P."/>
            <person name="Rubin E."/>
            <person name="Tice H."/>
        </authorList>
    </citation>
    <scope>NUCLEOTIDE SEQUENCE [LARGE SCALE GENOMIC DNA]</scope>
    <source>
        <strain>Sterne</strain>
    </source>
</reference>
<keyword id="KW-0663">Pyridoxal phosphate</keyword>
<keyword id="KW-1185">Reference proteome</keyword>
<keyword id="KW-0808">Transferase</keyword>
<organism>
    <name type="scientific">Bacillus anthracis</name>
    <dbReference type="NCBI Taxonomy" id="1392"/>
    <lineage>
        <taxon>Bacteria</taxon>
        <taxon>Bacillati</taxon>
        <taxon>Bacillota</taxon>
        <taxon>Bacilli</taxon>
        <taxon>Bacillales</taxon>
        <taxon>Bacillaceae</taxon>
        <taxon>Bacillus</taxon>
        <taxon>Bacillus cereus group</taxon>
    </lineage>
</organism>
<evidence type="ECO:0000250" key="1"/>
<evidence type="ECO:0000305" key="2"/>
<feature type="chain" id="PRO_0000163833" description="Putative pyridoxal phosphate-dependent acyltransferase">
    <location>
        <begin position="1"/>
        <end position="396"/>
    </location>
</feature>
<feature type="binding site" evidence="1">
    <location>
        <begin position="111"/>
        <end position="112"/>
    </location>
    <ligand>
        <name>pyridoxal 5'-phosphate</name>
        <dbReference type="ChEBI" id="CHEBI:597326"/>
    </ligand>
</feature>
<feature type="binding site" evidence="1">
    <location>
        <position position="136"/>
    </location>
    <ligand>
        <name>substrate</name>
    </ligand>
</feature>
<feature type="binding site" evidence="1">
    <location>
        <position position="186"/>
    </location>
    <ligand>
        <name>pyridoxal 5'-phosphate</name>
        <dbReference type="ChEBI" id="CHEBI:597326"/>
    </ligand>
</feature>
<feature type="binding site" evidence="1">
    <location>
        <begin position="211"/>
        <end position="214"/>
    </location>
    <ligand>
        <name>pyridoxal 5'-phosphate</name>
        <dbReference type="ChEBI" id="CHEBI:597326"/>
    </ligand>
</feature>
<feature type="binding site" evidence="1">
    <location>
        <begin position="241"/>
        <end position="244"/>
    </location>
    <ligand>
        <name>pyridoxal 5'-phosphate</name>
        <dbReference type="ChEBI" id="CHEBI:597326"/>
    </ligand>
</feature>
<feature type="binding site" evidence="1">
    <location>
        <position position="358"/>
    </location>
    <ligand>
        <name>substrate</name>
    </ligand>
</feature>
<feature type="modified residue" description="N6-(pyridoxal phosphate)lysine" evidence="2">
    <location>
        <position position="244"/>
    </location>
</feature>
<comment type="cofactor">
    <cofactor evidence="1">
        <name>pyridoxal 5'-phosphate</name>
        <dbReference type="ChEBI" id="CHEBI:597326"/>
    </cofactor>
</comment>
<comment type="subunit">
    <text evidence="1">Homodimer.</text>
</comment>
<comment type="similarity">
    <text evidence="2">Belongs to the class-II pyridoxal-phosphate-dependent aminotransferase family.</text>
</comment>
<accession>Q81V80</accession>
<accession>Q6I3G7</accession>
<accession>Q6KX80</accession>
<dbReference type="EC" id="2.3.1.-"/>
<dbReference type="EMBL" id="AE016879">
    <property type="protein sequence ID" value="AAP24637.1"/>
    <property type="molecule type" value="Genomic_DNA"/>
</dbReference>
<dbReference type="EMBL" id="AE017334">
    <property type="protein sequence ID" value="AAT29722.1"/>
    <property type="molecule type" value="Genomic_DNA"/>
</dbReference>
<dbReference type="EMBL" id="AE017225">
    <property type="protein sequence ID" value="AAT52914.1"/>
    <property type="molecule type" value="Genomic_DNA"/>
</dbReference>
<dbReference type="RefSeq" id="NP_843151.1">
    <property type="nucleotide sequence ID" value="NC_003997.3"/>
</dbReference>
<dbReference type="RefSeq" id="WP_000095911.1">
    <property type="nucleotide sequence ID" value="NZ_WXXJ01000017.1"/>
</dbReference>
<dbReference type="RefSeq" id="YP_026863.1">
    <property type="nucleotide sequence ID" value="NC_005945.1"/>
</dbReference>
<dbReference type="SMR" id="Q81V80"/>
<dbReference type="STRING" id="261594.GBAA_0620"/>
<dbReference type="DNASU" id="1087998"/>
<dbReference type="GeneID" id="45020681"/>
<dbReference type="KEGG" id="ban:BA_0620"/>
<dbReference type="KEGG" id="bar:GBAA_0620"/>
<dbReference type="KEGG" id="bat:BAS0586"/>
<dbReference type="PATRIC" id="fig|198094.11.peg.618"/>
<dbReference type="eggNOG" id="COG0156">
    <property type="taxonomic scope" value="Bacteria"/>
</dbReference>
<dbReference type="HOGENOM" id="CLU_015846_11_0_9"/>
<dbReference type="OMA" id="GTHEYCD"/>
<dbReference type="OrthoDB" id="9807157at2"/>
<dbReference type="Proteomes" id="UP000000427">
    <property type="component" value="Chromosome"/>
</dbReference>
<dbReference type="Proteomes" id="UP000000594">
    <property type="component" value="Chromosome"/>
</dbReference>
<dbReference type="GO" id="GO:0030170">
    <property type="term" value="F:pyridoxal phosphate binding"/>
    <property type="evidence" value="ECO:0007669"/>
    <property type="project" value="InterPro"/>
</dbReference>
<dbReference type="GO" id="GO:0016740">
    <property type="term" value="F:transferase activity"/>
    <property type="evidence" value="ECO:0007669"/>
    <property type="project" value="UniProtKB-KW"/>
</dbReference>
<dbReference type="GO" id="GO:0009058">
    <property type="term" value="P:biosynthetic process"/>
    <property type="evidence" value="ECO:0007669"/>
    <property type="project" value="InterPro"/>
</dbReference>
<dbReference type="CDD" id="cd06454">
    <property type="entry name" value="KBL_like"/>
    <property type="match status" value="1"/>
</dbReference>
<dbReference type="FunFam" id="3.40.640.10:FF:000006">
    <property type="entry name" value="5-aminolevulinate synthase, mitochondrial"/>
    <property type="match status" value="1"/>
</dbReference>
<dbReference type="Gene3D" id="3.90.1150.10">
    <property type="entry name" value="Aspartate Aminotransferase, domain 1"/>
    <property type="match status" value="1"/>
</dbReference>
<dbReference type="Gene3D" id="3.40.640.10">
    <property type="entry name" value="Type I PLP-dependent aspartate aminotransferase-like (Major domain)"/>
    <property type="match status" value="1"/>
</dbReference>
<dbReference type="InterPro" id="IPR001917">
    <property type="entry name" value="Aminotrans_II_pyridoxalP_BS"/>
</dbReference>
<dbReference type="InterPro" id="IPR004839">
    <property type="entry name" value="Aminotransferase_I/II_large"/>
</dbReference>
<dbReference type="InterPro" id="IPR050087">
    <property type="entry name" value="AON_synthase_class-II"/>
</dbReference>
<dbReference type="InterPro" id="IPR010962">
    <property type="entry name" value="AONS_Archaea/Firmicutes"/>
</dbReference>
<dbReference type="InterPro" id="IPR015424">
    <property type="entry name" value="PyrdxlP-dep_Trfase"/>
</dbReference>
<dbReference type="InterPro" id="IPR015421">
    <property type="entry name" value="PyrdxlP-dep_Trfase_major"/>
</dbReference>
<dbReference type="InterPro" id="IPR015422">
    <property type="entry name" value="PyrdxlP-dep_Trfase_small"/>
</dbReference>
<dbReference type="NCBIfam" id="TIGR01825">
    <property type="entry name" value="gly_Cac_T_rel"/>
    <property type="match status" value="1"/>
</dbReference>
<dbReference type="NCBIfam" id="NF005394">
    <property type="entry name" value="PRK06939.1"/>
    <property type="match status" value="1"/>
</dbReference>
<dbReference type="PANTHER" id="PTHR13693">
    <property type="entry name" value="CLASS II AMINOTRANSFERASE/8-AMINO-7-OXONONANOATE SYNTHASE"/>
    <property type="match status" value="1"/>
</dbReference>
<dbReference type="PANTHER" id="PTHR13693:SF3">
    <property type="entry name" value="LD36009P"/>
    <property type="match status" value="1"/>
</dbReference>
<dbReference type="Pfam" id="PF00155">
    <property type="entry name" value="Aminotran_1_2"/>
    <property type="match status" value="1"/>
</dbReference>
<dbReference type="SUPFAM" id="SSF53383">
    <property type="entry name" value="PLP-dependent transferases"/>
    <property type="match status" value="1"/>
</dbReference>
<dbReference type="PROSITE" id="PS00599">
    <property type="entry name" value="AA_TRANSFER_CLASS_2"/>
    <property type="match status" value="1"/>
</dbReference>
<sequence>MSSKTLAKFLEENLEDLKSKGLYNVIDPLESSNGPIITIGGKEYINLSSNNYLGLATDSRLQEAAIGAIHKYGVGAGAVRTINGTLDLHIKLEETIAKFKHTEAAIAYQSGFNCNMAAISAVMDKNDAILSDELNHASIIDGSRLSKAKIIVYKHSDMEDLRQKAIAAKESGLYNKLMVITDGVFSMDGDVAKLPEIVEIAEELDLMTYVDDAHGSGVLGKGAGTVKHFGLSDKVDFQIGTLSKAIGVIGGYVAGKQNLIDWLKVRSRPFLFSTAVTPADAAACMRSIEILMESTELHDRLWENGRYLKQGLKELGFNIGESETPITPCIIGDEVLTQEFSKRLNEEGVYAKSIVFPTVAKGTGRVRNMPTAAHTKEMLDEAIRKYEKVGKEMGII</sequence>
<proteinExistence type="inferred from homology"/>
<gene>
    <name type="ordered locus">BA_0620</name>
    <name type="ordered locus">GBAA_0620</name>
    <name type="ordered locus">BAS0586</name>
</gene>
<name>PPAT_BACAN</name>
<protein>
    <recommendedName>
        <fullName>Putative pyridoxal phosphate-dependent acyltransferase</fullName>
        <ecNumber>2.3.1.-</ecNumber>
    </recommendedName>
</protein>